<gene>
    <name evidence="2" type="primary">Znf830</name>
    <name evidence="2" type="synonym">Ccdc16</name>
    <name evidence="5" type="synonym">Zfp830</name>
</gene>
<dbReference type="EMBL" id="BC104717">
    <property type="protein sequence ID" value="AAI04718.1"/>
    <property type="molecule type" value="mRNA"/>
</dbReference>
<dbReference type="RefSeq" id="NP_001032437.1">
    <property type="nucleotide sequence ID" value="NM_001037360.1"/>
</dbReference>
<dbReference type="SMR" id="Q3MHS2"/>
<dbReference type="FunCoup" id="Q3MHS2">
    <property type="interactions" value="3472"/>
</dbReference>
<dbReference type="STRING" id="10116.ENSRNOP00000009970"/>
<dbReference type="iPTMnet" id="Q3MHS2"/>
<dbReference type="PhosphoSitePlus" id="Q3MHS2"/>
<dbReference type="PaxDb" id="10116-ENSRNOP00000009970"/>
<dbReference type="Ensembl" id="ENSRNOT00000009970.6">
    <property type="protein sequence ID" value="ENSRNOP00000009970.3"/>
    <property type="gene ID" value="ENSRNOG00000007578.6"/>
</dbReference>
<dbReference type="GeneID" id="497967"/>
<dbReference type="KEGG" id="rno:497967"/>
<dbReference type="AGR" id="RGD:1562573"/>
<dbReference type="CTD" id="66983"/>
<dbReference type="RGD" id="1562573">
    <property type="gene designation" value="Zfp830"/>
</dbReference>
<dbReference type="eggNOG" id="KOG3032">
    <property type="taxonomic scope" value="Eukaryota"/>
</dbReference>
<dbReference type="GeneTree" id="ENSGT00390000012151"/>
<dbReference type="HOGENOM" id="CLU_058140_1_0_1"/>
<dbReference type="InParanoid" id="Q3MHS2"/>
<dbReference type="OMA" id="KQPPDAQ"/>
<dbReference type="OrthoDB" id="77607at2759"/>
<dbReference type="PhylomeDB" id="Q3MHS2"/>
<dbReference type="TreeFam" id="TF315895"/>
<dbReference type="Reactome" id="R-RNO-6781823">
    <property type="pathway name" value="Formation of TC-NER Pre-Incision Complex"/>
</dbReference>
<dbReference type="Reactome" id="R-RNO-6782135">
    <property type="pathway name" value="Dual incision in TC-NER"/>
</dbReference>
<dbReference type="Reactome" id="R-RNO-6782210">
    <property type="pathway name" value="Gap-filling DNA repair synthesis and ligation in TC-NER"/>
</dbReference>
<dbReference type="Reactome" id="R-RNO-72163">
    <property type="pathway name" value="mRNA Splicing - Major Pathway"/>
</dbReference>
<dbReference type="PRO" id="PR:Q3MHS2"/>
<dbReference type="Proteomes" id="UP000002494">
    <property type="component" value="Chromosome 10"/>
</dbReference>
<dbReference type="Bgee" id="ENSRNOG00000007578">
    <property type="expression patterns" value="Expressed in thymus and 20 other cell types or tissues"/>
</dbReference>
<dbReference type="GO" id="GO:0005694">
    <property type="term" value="C:chromosome"/>
    <property type="evidence" value="ECO:0007669"/>
    <property type="project" value="UniProtKB-SubCell"/>
</dbReference>
<dbReference type="GO" id="GO:0016607">
    <property type="term" value="C:nuclear speck"/>
    <property type="evidence" value="ECO:0000266"/>
    <property type="project" value="RGD"/>
</dbReference>
<dbReference type="GO" id="GO:0005634">
    <property type="term" value="C:nucleus"/>
    <property type="evidence" value="ECO:0000266"/>
    <property type="project" value="RGD"/>
</dbReference>
<dbReference type="GO" id="GO:0005681">
    <property type="term" value="C:spliceosomal complex"/>
    <property type="evidence" value="ECO:0007669"/>
    <property type="project" value="UniProtKB-KW"/>
</dbReference>
<dbReference type="GO" id="GO:0003676">
    <property type="term" value="F:nucleic acid binding"/>
    <property type="evidence" value="ECO:0007669"/>
    <property type="project" value="InterPro"/>
</dbReference>
<dbReference type="GO" id="GO:0008270">
    <property type="term" value="F:zinc ion binding"/>
    <property type="evidence" value="ECO:0007669"/>
    <property type="project" value="UniProtKB-KW"/>
</dbReference>
<dbReference type="GO" id="GO:0001832">
    <property type="term" value="P:blastocyst growth"/>
    <property type="evidence" value="ECO:0000266"/>
    <property type="project" value="RGD"/>
</dbReference>
<dbReference type="GO" id="GO:0051301">
    <property type="term" value="P:cell division"/>
    <property type="evidence" value="ECO:0007669"/>
    <property type="project" value="UniProtKB-KW"/>
</dbReference>
<dbReference type="GO" id="GO:0051276">
    <property type="term" value="P:chromosome organization"/>
    <property type="evidence" value="ECO:0000266"/>
    <property type="project" value="RGD"/>
</dbReference>
<dbReference type="GO" id="GO:0060729">
    <property type="term" value="P:intestinal epithelial structure maintenance"/>
    <property type="evidence" value="ECO:0000266"/>
    <property type="project" value="RGD"/>
</dbReference>
<dbReference type="GO" id="GO:0000278">
    <property type="term" value="P:mitotic cell cycle"/>
    <property type="evidence" value="ECO:0000266"/>
    <property type="project" value="RGD"/>
</dbReference>
<dbReference type="GO" id="GO:0044773">
    <property type="term" value="P:mitotic DNA damage checkpoint signaling"/>
    <property type="evidence" value="ECO:0000266"/>
    <property type="project" value="RGD"/>
</dbReference>
<dbReference type="GO" id="GO:0033314">
    <property type="term" value="P:mitotic DNA replication checkpoint signaling"/>
    <property type="evidence" value="ECO:0000250"/>
    <property type="project" value="UniProtKB"/>
</dbReference>
<dbReference type="GO" id="GO:0006397">
    <property type="term" value="P:mRNA processing"/>
    <property type="evidence" value="ECO:0007669"/>
    <property type="project" value="UniProtKB-KW"/>
</dbReference>
<dbReference type="GO" id="GO:0043066">
    <property type="term" value="P:negative regulation of apoptotic process"/>
    <property type="evidence" value="ECO:0000250"/>
    <property type="project" value="UniProtKB"/>
</dbReference>
<dbReference type="GO" id="GO:0033260">
    <property type="term" value="P:nuclear DNA replication"/>
    <property type="evidence" value="ECO:0000266"/>
    <property type="project" value="RGD"/>
</dbReference>
<dbReference type="GO" id="GO:0001541">
    <property type="term" value="P:ovarian follicle development"/>
    <property type="evidence" value="ECO:0000250"/>
    <property type="project" value="UniProtKB"/>
</dbReference>
<dbReference type="GO" id="GO:0001546">
    <property type="term" value="P:preantral ovarian follicle growth"/>
    <property type="evidence" value="ECO:0000250"/>
    <property type="project" value="UniProtKB"/>
</dbReference>
<dbReference type="GO" id="GO:0006396">
    <property type="term" value="P:RNA processing"/>
    <property type="evidence" value="ECO:0000250"/>
    <property type="project" value="UniProtKB"/>
</dbReference>
<dbReference type="GO" id="GO:0008380">
    <property type="term" value="P:RNA splicing"/>
    <property type="evidence" value="ECO:0007669"/>
    <property type="project" value="UniProtKB-KW"/>
</dbReference>
<dbReference type="FunFam" id="3.30.160.60:FF:001398">
    <property type="entry name" value="zinc finger protein 830"/>
    <property type="match status" value="1"/>
</dbReference>
<dbReference type="Gene3D" id="3.30.160.60">
    <property type="entry name" value="Classic Zinc Finger"/>
    <property type="match status" value="1"/>
</dbReference>
<dbReference type="InterPro" id="IPR003604">
    <property type="entry name" value="Matrin/U1-like-C_Znf_C2H2"/>
</dbReference>
<dbReference type="InterPro" id="IPR040050">
    <property type="entry name" value="ZNF830-like"/>
</dbReference>
<dbReference type="InterPro" id="IPR036236">
    <property type="entry name" value="Znf_C2H2_sf"/>
</dbReference>
<dbReference type="InterPro" id="IPR013087">
    <property type="entry name" value="Znf_C2H2_type"/>
</dbReference>
<dbReference type="PANTHER" id="PTHR13278">
    <property type="entry name" value="ZINC FINGER PROTEIN 830"/>
    <property type="match status" value="1"/>
</dbReference>
<dbReference type="PANTHER" id="PTHR13278:SF0">
    <property type="entry name" value="ZINC FINGER PROTEIN 830"/>
    <property type="match status" value="1"/>
</dbReference>
<dbReference type="Pfam" id="PF12874">
    <property type="entry name" value="zf-met"/>
    <property type="match status" value="1"/>
</dbReference>
<dbReference type="Pfam" id="PF23406">
    <property type="entry name" value="ZNF380_CC"/>
    <property type="match status" value="1"/>
</dbReference>
<dbReference type="SMART" id="SM00451">
    <property type="entry name" value="ZnF_U1"/>
    <property type="match status" value="1"/>
</dbReference>
<dbReference type="SUPFAM" id="SSF57667">
    <property type="entry name" value="beta-beta-alpha zinc fingers"/>
    <property type="match status" value="1"/>
</dbReference>
<dbReference type="PROSITE" id="PS00028">
    <property type="entry name" value="ZINC_FINGER_C2H2_1"/>
    <property type="match status" value="1"/>
</dbReference>
<comment type="function">
    <text evidence="1 2">May play a role in pre-mRNA splicing as component of the spliceosome (By similarity). Acts as an important regulator of the cell cycle that participates in the maintenance of genome integrity. During cell cycle progression in embryonic fibroblast, prevents replication fork collapse, double-strand break formation and cell cycle checkpoint activation. Controls mitotic cell cycle progression and cell survival in rapidly proliferating intestinal epithelium and embryonic stem cells. During the embryo preimplantation, controls different aspects of M phase. During early oocyte growth, plays a role in oocyte survival by preventing chromosomal breaks formation, activation of TP63 and reduction of transcription (By similarity).</text>
</comment>
<comment type="subunit">
    <text evidence="2">Component of the XAB2 complex, a multimeric protein complex composed of XAB2, PRPF19, AQR, ZNF830, ISY1, and PPIE; this complex binds preferentially to RNA. Interacts with XAB2. Identified in a pentameric intron-binding (IB) complex composed of AQR, XAB2, ISY1, ZNF830 and PPIE that is incorporated into the spliceosome as a preassembled complex. The IB complex does not contain PRPF19.</text>
</comment>
<comment type="subcellular location">
    <subcellularLocation>
        <location evidence="1">Nucleus</location>
    </subcellularLocation>
    <subcellularLocation>
        <location evidence="1">Chromosome</location>
    </subcellularLocation>
    <subcellularLocation>
        <location evidence="1">Nucleus speckle</location>
    </subcellularLocation>
    <text evidence="1">Excluded from nucleolus.</text>
</comment>
<comment type="PTM">
    <text evidence="1">Phosphorylated in response to DNA damage by the cell cycle checkpoint kinases ATR/ATM.</text>
</comment>
<evidence type="ECO:0000250" key="1">
    <source>
        <dbReference type="UniProtKB" id="Q8R1N0"/>
    </source>
</evidence>
<evidence type="ECO:0000250" key="2">
    <source>
        <dbReference type="UniProtKB" id="Q96NB3"/>
    </source>
</evidence>
<evidence type="ECO:0000255" key="3"/>
<evidence type="ECO:0000256" key="4">
    <source>
        <dbReference type="SAM" id="MobiDB-lite"/>
    </source>
</evidence>
<evidence type="ECO:0000312" key="5">
    <source>
        <dbReference type="RGD" id="1562573"/>
    </source>
</evidence>
<evidence type="ECO:0007744" key="6">
    <source>
    </source>
</evidence>
<name>ZN830_RAT</name>
<keyword id="KW-0007">Acetylation</keyword>
<keyword id="KW-0131">Cell cycle</keyword>
<keyword id="KW-0132">Cell division</keyword>
<keyword id="KW-0158">Chromosome</keyword>
<keyword id="KW-0175">Coiled coil</keyword>
<keyword id="KW-0217">Developmental protein</keyword>
<keyword id="KW-0479">Metal-binding</keyword>
<keyword id="KW-0498">Mitosis</keyword>
<keyword id="KW-0507">mRNA processing</keyword>
<keyword id="KW-0508">mRNA splicing</keyword>
<keyword id="KW-0539">Nucleus</keyword>
<keyword id="KW-0597">Phosphoprotein</keyword>
<keyword id="KW-1185">Reference proteome</keyword>
<keyword id="KW-0747">Spliceosome</keyword>
<keyword id="KW-0862">Zinc</keyword>
<keyword id="KW-0863">Zinc-finger</keyword>
<organism>
    <name type="scientific">Rattus norvegicus</name>
    <name type="common">Rat</name>
    <dbReference type="NCBI Taxonomy" id="10116"/>
    <lineage>
        <taxon>Eukaryota</taxon>
        <taxon>Metazoa</taxon>
        <taxon>Chordata</taxon>
        <taxon>Craniata</taxon>
        <taxon>Vertebrata</taxon>
        <taxon>Euteleostomi</taxon>
        <taxon>Mammalia</taxon>
        <taxon>Eutheria</taxon>
        <taxon>Euarchontoglires</taxon>
        <taxon>Glires</taxon>
        <taxon>Rodentia</taxon>
        <taxon>Myomorpha</taxon>
        <taxon>Muroidea</taxon>
        <taxon>Muridae</taxon>
        <taxon>Murinae</taxon>
        <taxon>Rattus</taxon>
    </lineage>
</organism>
<feature type="initiator methionine" description="Removed" evidence="2">
    <location>
        <position position="1"/>
    </location>
</feature>
<feature type="chain" id="PRO_0000076195" description="Zinc finger protein 830">
    <location>
        <begin position="2"/>
        <end position="370"/>
    </location>
</feature>
<feature type="zinc finger region" description="C2H2-type">
    <location>
        <begin position="53"/>
        <end position="75"/>
    </location>
</feature>
<feature type="region of interest" description="Disordered" evidence="4">
    <location>
        <begin position="1"/>
        <end position="21"/>
    </location>
</feature>
<feature type="region of interest" description="Disordered" evidence="4">
    <location>
        <begin position="75"/>
        <end position="220"/>
    </location>
</feature>
<feature type="coiled-coil region" evidence="3">
    <location>
        <begin position="16"/>
        <end position="40"/>
    </location>
</feature>
<feature type="coiled-coil region" evidence="3">
    <location>
        <begin position="310"/>
        <end position="338"/>
    </location>
</feature>
<feature type="compositionally biased region" description="Polar residues" evidence="4">
    <location>
        <begin position="90"/>
        <end position="99"/>
    </location>
</feature>
<feature type="compositionally biased region" description="Basic and acidic residues" evidence="4">
    <location>
        <begin position="104"/>
        <end position="115"/>
    </location>
</feature>
<feature type="compositionally biased region" description="Polar residues" evidence="4">
    <location>
        <begin position="121"/>
        <end position="134"/>
    </location>
</feature>
<feature type="compositionally biased region" description="Acidic residues" evidence="4">
    <location>
        <begin position="156"/>
        <end position="171"/>
    </location>
</feature>
<feature type="compositionally biased region" description="Basic and acidic residues" evidence="4">
    <location>
        <begin position="172"/>
        <end position="191"/>
    </location>
</feature>
<feature type="compositionally biased region" description="Polar residues" evidence="4">
    <location>
        <begin position="196"/>
        <end position="212"/>
    </location>
</feature>
<feature type="modified residue" description="N-acetylalanine" evidence="2">
    <location>
        <position position="2"/>
    </location>
</feature>
<feature type="modified residue" description="Phosphoserine" evidence="2">
    <location>
        <position position="223"/>
    </location>
</feature>
<feature type="modified residue" description="Phosphoserine" evidence="6">
    <location>
        <position position="349"/>
    </location>
</feature>
<feature type="modified residue" description="Phosphoserine" evidence="2">
    <location>
        <position position="360"/>
    </location>
</feature>
<protein>
    <recommendedName>
        <fullName evidence="2">Zinc finger protein 830</fullName>
    </recommendedName>
    <alternativeName>
        <fullName evidence="2">Coiled-coil domain-containing protein 16</fullName>
    </alternativeName>
</protein>
<sequence>MASSTSARTPAGKRVVNQEELRRLMKEKQRLSTNRKRIESPFAKYNRLGQLSCALCNTPVKSELLWQTHVLGKQHRERVAELKGAKGATQGPSAGTAPQPTKRKTTDVESQDAKKAKASVDQVQPSTSASSANFEKSGKEATRVASSKTGLGLLPDYEEEEEEEEEEELGGGEERRDSSKHLPDAQGREHSLASPRETTSNVLPNDPFNTNPPKAPLVPHSGSIEKAEIHEKVVERRENTAEALPEGFFDDPEVDAKVRKVDAPKDQMDKEWDEFQKAMRQVNTISEAIVAEEDEEGRLDRQIGEIDEQIECYRRVEKLRNRQDEIKNKLKEVLTIKELQKKEEENVDSDDEGELQDLLSQDWRVKGALL</sequence>
<reference key="1">
    <citation type="journal article" date="2004" name="Genome Res.">
        <title>The status, quality, and expansion of the NIH full-length cDNA project: the Mammalian Gene Collection (MGC).</title>
        <authorList>
            <consortium name="The MGC Project Team"/>
        </authorList>
    </citation>
    <scope>NUCLEOTIDE SEQUENCE [LARGE SCALE MRNA]</scope>
    <source>
        <tissue>Thymus</tissue>
    </source>
</reference>
<reference key="2">
    <citation type="journal article" date="2012" name="Nat. Commun.">
        <title>Quantitative maps of protein phosphorylation sites across 14 different rat organs and tissues.</title>
        <authorList>
            <person name="Lundby A."/>
            <person name="Secher A."/>
            <person name="Lage K."/>
            <person name="Nordsborg N.B."/>
            <person name="Dmytriyev A."/>
            <person name="Lundby C."/>
            <person name="Olsen J.V."/>
        </authorList>
    </citation>
    <scope>PHOSPHORYLATION [LARGE SCALE ANALYSIS] AT SER-349</scope>
    <scope>IDENTIFICATION BY MASS SPECTROMETRY [LARGE SCALE ANALYSIS]</scope>
</reference>
<accession>Q3MHS2</accession>
<proteinExistence type="evidence at protein level"/>